<accession>Q9FIJ2</accession>
<evidence type="ECO:0000250" key="1"/>
<evidence type="ECO:0000305" key="2"/>
<evidence type="ECO:0007829" key="3">
    <source>
        <dbReference type="PDB" id="8BED"/>
    </source>
</evidence>
<reference key="1">
    <citation type="journal article" date="1998" name="DNA Res.">
        <title>Structural analysis of Arabidopsis thaliana chromosome 5. VIII. Sequence features of the regions of 1,081,958 bp covered by seventeen physically assigned P1 and TAC clones.</title>
        <authorList>
            <person name="Asamizu E."/>
            <person name="Sato S."/>
            <person name="Kaneko T."/>
            <person name="Nakamura Y."/>
            <person name="Kotani H."/>
            <person name="Miyajima N."/>
            <person name="Tabata S."/>
        </authorList>
    </citation>
    <scope>NUCLEOTIDE SEQUENCE [LARGE SCALE GENOMIC DNA]</scope>
    <source>
        <strain>cv. Columbia</strain>
    </source>
</reference>
<reference key="2">
    <citation type="journal article" date="2017" name="Plant J.">
        <title>Araport11: a complete reannotation of the Arabidopsis thaliana reference genome.</title>
        <authorList>
            <person name="Cheng C.Y."/>
            <person name="Krishnakumar V."/>
            <person name="Chan A.P."/>
            <person name="Thibaud-Nissen F."/>
            <person name="Schobel S."/>
            <person name="Town C.D."/>
        </authorList>
    </citation>
    <scope>GENOME REANNOTATION</scope>
    <source>
        <strain>cv. Columbia</strain>
    </source>
</reference>
<reference key="3">
    <citation type="journal article" date="2003" name="Science">
        <title>Empirical analysis of transcriptional activity in the Arabidopsis genome.</title>
        <authorList>
            <person name="Yamada K."/>
            <person name="Lim J."/>
            <person name="Dale J.M."/>
            <person name="Chen H."/>
            <person name="Shinn P."/>
            <person name="Palm C.J."/>
            <person name="Southwick A.M."/>
            <person name="Wu H.C."/>
            <person name="Kim C.J."/>
            <person name="Nguyen M."/>
            <person name="Pham P.K."/>
            <person name="Cheuk R.F."/>
            <person name="Karlin-Newmann G."/>
            <person name="Liu S.X."/>
            <person name="Lam B."/>
            <person name="Sakano H."/>
            <person name="Wu T."/>
            <person name="Yu G."/>
            <person name="Miranda M."/>
            <person name="Quach H.L."/>
            <person name="Tripp M."/>
            <person name="Chang C.H."/>
            <person name="Lee J.M."/>
            <person name="Toriumi M.J."/>
            <person name="Chan M.M."/>
            <person name="Tang C.C."/>
            <person name="Onodera C.S."/>
            <person name="Deng J.M."/>
            <person name="Akiyama K."/>
            <person name="Ansari Y."/>
            <person name="Arakawa T."/>
            <person name="Banh J."/>
            <person name="Banno F."/>
            <person name="Bowser L."/>
            <person name="Brooks S.Y."/>
            <person name="Carninci P."/>
            <person name="Chao Q."/>
            <person name="Choy N."/>
            <person name="Enju A."/>
            <person name="Goldsmith A.D."/>
            <person name="Gurjal M."/>
            <person name="Hansen N.F."/>
            <person name="Hayashizaki Y."/>
            <person name="Johnson-Hopson C."/>
            <person name="Hsuan V.W."/>
            <person name="Iida K."/>
            <person name="Karnes M."/>
            <person name="Khan S."/>
            <person name="Koesema E."/>
            <person name="Ishida J."/>
            <person name="Jiang P.X."/>
            <person name="Jones T."/>
            <person name="Kawai J."/>
            <person name="Kamiya A."/>
            <person name="Meyers C."/>
            <person name="Nakajima M."/>
            <person name="Narusaka M."/>
            <person name="Seki M."/>
            <person name="Sakurai T."/>
            <person name="Satou M."/>
            <person name="Tamse R."/>
            <person name="Vaysberg M."/>
            <person name="Wallender E.K."/>
            <person name="Wong C."/>
            <person name="Yamamura Y."/>
            <person name="Yuan S."/>
            <person name="Shinozaki K."/>
            <person name="Davis R.W."/>
            <person name="Theologis A."/>
            <person name="Ecker J.R."/>
        </authorList>
    </citation>
    <scope>NUCLEOTIDE SEQUENCE [LARGE SCALE MRNA]</scope>
    <source>
        <strain>cv. Columbia</strain>
    </source>
</reference>
<reference key="4">
    <citation type="submission" date="2002-03" db="EMBL/GenBank/DDBJ databases">
        <title>Full-length cDNA from Arabidopsis thaliana.</title>
        <authorList>
            <person name="Brover V.V."/>
            <person name="Troukhan M.E."/>
            <person name="Alexandrov N.A."/>
            <person name="Lu Y.-P."/>
            <person name="Flavell R.B."/>
            <person name="Feldmann K.A."/>
        </authorList>
    </citation>
    <scope>NUCLEOTIDE SEQUENCE [LARGE SCALE MRNA]</scope>
</reference>
<gene>
    <name type="ordered locus">At5g47890</name>
    <name type="ORF">MCA23_23</name>
</gene>
<name>NDUA2_ARATH</name>
<dbReference type="EMBL" id="AB016886">
    <property type="protein sequence ID" value="BAB11336.1"/>
    <property type="molecule type" value="Genomic_DNA"/>
</dbReference>
<dbReference type="EMBL" id="CP002688">
    <property type="protein sequence ID" value="AED95585.1"/>
    <property type="molecule type" value="Genomic_DNA"/>
</dbReference>
<dbReference type="EMBL" id="AY065304">
    <property type="protein sequence ID" value="AAL38780.1"/>
    <property type="molecule type" value="mRNA"/>
</dbReference>
<dbReference type="EMBL" id="AY096432">
    <property type="protein sequence ID" value="AAM20072.1"/>
    <property type="molecule type" value="mRNA"/>
</dbReference>
<dbReference type="EMBL" id="AY087919">
    <property type="protein sequence ID" value="AAM65469.1"/>
    <property type="molecule type" value="mRNA"/>
</dbReference>
<dbReference type="RefSeq" id="NP_199600.1">
    <property type="nucleotide sequence ID" value="NM_124163.5"/>
</dbReference>
<dbReference type="PDB" id="7A23">
    <property type="method" value="EM"/>
    <property type="resolution" value="3.70 A"/>
    <property type="chains" value="Q=1-97"/>
</dbReference>
<dbReference type="PDB" id="7A24">
    <property type="method" value="EM"/>
    <property type="resolution" value="3.80 A"/>
    <property type="chains" value="Q=1-97"/>
</dbReference>
<dbReference type="PDB" id="7AQR">
    <property type="method" value="EM"/>
    <property type="resolution" value="2.91 A"/>
    <property type="chains" value="S=1-97"/>
</dbReference>
<dbReference type="PDB" id="7AR7">
    <property type="method" value="EM"/>
    <property type="resolution" value="3.72 A"/>
    <property type="chains" value="S=2-94"/>
</dbReference>
<dbReference type="PDB" id="7AR8">
    <property type="method" value="EM"/>
    <property type="resolution" value="3.53 A"/>
    <property type="chains" value="S=1-97"/>
</dbReference>
<dbReference type="PDB" id="7ARB">
    <property type="method" value="EM"/>
    <property type="resolution" value="3.41 A"/>
    <property type="chains" value="S=1-97"/>
</dbReference>
<dbReference type="PDB" id="8BED">
    <property type="method" value="EM"/>
    <property type="resolution" value="2.03 A"/>
    <property type="chains" value="S=1-97"/>
</dbReference>
<dbReference type="PDB" id="8BPX">
    <property type="method" value="EM"/>
    <property type="resolution" value="2.09 A"/>
    <property type="chains" value="S=1-97"/>
</dbReference>
<dbReference type="PDB" id="8BQ5">
    <property type="method" value="EM"/>
    <property type="resolution" value="2.73 A"/>
    <property type="chains" value="S=1-97"/>
</dbReference>
<dbReference type="PDB" id="8BQ6">
    <property type="method" value="EM"/>
    <property type="resolution" value="2.80 A"/>
    <property type="chains" value="S=1-97"/>
</dbReference>
<dbReference type="PDBsum" id="7A23"/>
<dbReference type="PDBsum" id="7A24"/>
<dbReference type="PDBsum" id="7AQR"/>
<dbReference type="PDBsum" id="7AR7"/>
<dbReference type="PDBsum" id="7AR8"/>
<dbReference type="PDBsum" id="7ARB"/>
<dbReference type="PDBsum" id="8BED"/>
<dbReference type="PDBsum" id="8BPX"/>
<dbReference type="PDBsum" id="8BQ5"/>
<dbReference type="PDBsum" id="8BQ6"/>
<dbReference type="EMDB" id="EMD-11873"/>
<dbReference type="EMDB" id="EMD-11878"/>
<dbReference type="EMDB" id="EMD-15998"/>
<dbReference type="EMDB" id="EMD-16168"/>
<dbReference type="EMDB" id="EMD-16171"/>
<dbReference type="EMDB" id="EMD-16172"/>
<dbReference type="SMR" id="Q9FIJ2"/>
<dbReference type="BioGRID" id="20088">
    <property type="interactions" value="3"/>
</dbReference>
<dbReference type="FunCoup" id="Q9FIJ2">
    <property type="interactions" value="3031"/>
</dbReference>
<dbReference type="IntAct" id="Q9FIJ2">
    <property type="interactions" value="1"/>
</dbReference>
<dbReference type="STRING" id="3702.Q9FIJ2"/>
<dbReference type="TCDB" id="3.D.1.6.3">
    <property type="family name" value="the h+ or na+-translocating nadh dehydrogenase (ndh) family"/>
</dbReference>
<dbReference type="PaxDb" id="3702-AT5G47890.1"/>
<dbReference type="ProteomicsDB" id="251131"/>
<dbReference type="EnsemblPlants" id="AT5G47890.1">
    <property type="protein sequence ID" value="AT5G47890.1"/>
    <property type="gene ID" value="AT5G47890"/>
</dbReference>
<dbReference type="GeneID" id="834840"/>
<dbReference type="Gramene" id="AT5G47890.1">
    <property type="protein sequence ID" value="AT5G47890.1"/>
    <property type="gene ID" value="AT5G47890"/>
</dbReference>
<dbReference type="KEGG" id="ath:AT5G47890"/>
<dbReference type="Araport" id="AT5G47890"/>
<dbReference type="TAIR" id="AT5G47890"/>
<dbReference type="eggNOG" id="KOG3446">
    <property type="taxonomic scope" value="Eukaryota"/>
</dbReference>
<dbReference type="HOGENOM" id="CLU_110897_1_0_1"/>
<dbReference type="InParanoid" id="Q9FIJ2"/>
<dbReference type="OMA" id="IRECEGI"/>
<dbReference type="OrthoDB" id="10250268at2759"/>
<dbReference type="PhylomeDB" id="Q9FIJ2"/>
<dbReference type="CD-CODE" id="4299E36E">
    <property type="entry name" value="Nucleolus"/>
</dbReference>
<dbReference type="PRO" id="PR:Q9FIJ2"/>
<dbReference type="Proteomes" id="UP000006548">
    <property type="component" value="Chromosome 5"/>
</dbReference>
<dbReference type="ExpressionAtlas" id="Q9FIJ2">
    <property type="expression patterns" value="baseline and differential"/>
</dbReference>
<dbReference type="GO" id="GO:0005743">
    <property type="term" value="C:mitochondrial inner membrane"/>
    <property type="evidence" value="ECO:0007669"/>
    <property type="project" value="UniProtKB-SubCell"/>
</dbReference>
<dbReference type="GO" id="GO:0005739">
    <property type="term" value="C:mitochondrion"/>
    <property type="evidence" value="ECO:0007005"/>
    <property type="project" value="TAIR"/>
</dbReference>
<dbReference type="GO" id="GO:0009536">
    <property type="term" value="C:plastid"/>
    <property type="evidence" value="ECO:0007005"/>
    <property type="project" value="TAIR"/>
</dbReference>
<dbReference type="FunFam" id="3.40.30.10:FF:000179">
    <property type="entry name" value="NADH-ubiquinone oxidoreductase 10.5 kDa subunit"/>
    <property type="match status" value="1"/>
</dbReference>
<dbReference type="Gene3D" id="3.40.30.10">
    <property type="entry name" value="Glutaredoxin"/>
    <property type="match status" value="1"/>
</dbReference>
<dbReference type="InterPro" id="IPR016464">
    <property type="entry name" value="NADH_Ub_cplx-1_asu_su-2"/>
</dbReference>
<dbReference type="InterPro" id="IPR007741">
    <property type="entry name" value="Ribosomal_mL43/mS25/NADH_DH"/>
</dbReference>
<dbReference type="InterPro" id="IPR036249">
    <property type="entry name" value="Thioredoxin-like_sf"/>
</dbReference>
<dbReference type="PANTHER" id="PTHR12878:SF0">
    <property type="entry name" value="NADH DEHYDROGENASE [UBIQUINONE] 1 ALPHA SUBCOMPLEX SUBUNIT 2"/>
    <property type="match status" value="1"/>
</dbReference>
<dbReference type="PANTHER" id="PTHR12878">
    <property type="entry name" value="NADH-UBIQUINONE OXIDOREDUCTASE B8 SUBUNIT"/>
    <property type="match status" value="1"/>
</dbReference>
<dbReference type="Pfam" id="PF05047">
    <property type="entry name" value="L51_S25_CI-B8"/>
    <property type="match status" value="1"/>
</dbReference>
<dbReference type="PIRSF" id="PIRSF005822">
    <property type="entry name" value="NDUA2"/>
    <property type="match status" value="1"/>
</dbReference>
<dbReference type="SMART" id="SM00916">
    <property type="entry name" value="L51_S25_CI-B8"/>
    <property type="match status" value="1"/>
</dbReference>
<dbReference type="SUPFAM" id="SSF52833">
    <property type="entry name" value="Thioredoxin-like"/>
    <property type="match status" value="1"/>
</dbReference>
<organism>
    <name type="scientific">Arabidopsis thaliana</name>
    <name type="common">Mouse-ear cress</name>
    <dbReference type="NCBI Taxonomy" id="3702"/>
    <lineage>
        <taxon>Eukaryota</taxon>
        <taxon>Viridiplantae</taxon>
        <taxon>Streptophyta</taxon>
        <taxon>Embryophyta</taxon>
        <taxon>Tracheophyta</taxon>
        <taxon>Spermatophyta</taxon>
        <taxon>Magnoliopsida</taxon>
        <taxon>eudicotyledons</taxon>
        <taxon>Gunneridae</taxon>
        <taxon>Pentapetalae</taxon>
        <taxon>rosids</taxon>
        <taxon>malvids</taxon>
        <taxon>Brassicales</taxon>
        <taxon>Brassicaceae</taxon>
        <taxon>Camelineae</taxon>
        <taxon>Arabidopsis</taxon>
    </lineage>
</organism>
<proteinExistence type="evidence at protein level"/>
<comment type="function">
    <text evidence="1">Accessory subunit of the mitochondrial membrane respiratory chain NADH dehydrogenase (Complex I), that is believed not to be involved in catalysis. Complex I functions in the transfer of electrons from NADH to the respiratory chain. The immediate electron acceptor for the enzyme is believed to be ubiquinone (By similarity).</text>
</comment>
<comment type="subunit">
    <text>Complex I is composed of at least 49 different subunits.</text>
</comment>
<comment type="subcellular location">
    <subcellularLocation>
        <location evidence="1">Mitochondrion inner membrane</location>
        <topology evidence="1">Peripheral membrane protein</topology>
        <orientation evidence="1">Matrix side</orientation>
    </subcellularLocation>
</comment>
<comment type="similarity">
    <text evidence="2">Belongs to the complex I NDUFA2 subunit family.</text>
</comment>
<keyword id="KW-0002">3D-structure</keyword>
<keyword id="KW-1015">Disulfide bond</keyword>
<keyword id="KW-0249">Electron transport</keyword>
<keyword id="KW-0472">Membrane</keyword>
<keyword id="KW-0496">Mitochondrion</keyword>
<keyword id="KW-0999">Mitochondrion inner membrane</keyword>
<keyword id="KW-1185">Reference proteome</keyword>
<keyword id="KW-0679">Respiratory chain</keyword>
<keyword id="KW-0813">Transport</keyword>
<protein>
    <recommendedName>
        <fullName>NADH dehydrogenase [ubiquinone] 1 alpha subcomplex subunit 2</fullName>
    </recommendedName>
</protein>
<sequence length="97" mass="10851">MAWRGSISKSMKELRILLCQSSPASAPTRTFVEKNYKDLKSLNPKLPILIRECSGVQPQMWARYDMGVERCVNLDGLTEPQILKALENLVKSGATKA</sequence>
<feature type="chain" id="PRO_0000410931" description="NADH dehydrogenase [ubiquinone] 1 alpha subcomplex subunit 2">
    <location>
        <begin position="1"/>
        <end position="97"/>
    </location>
</feature>
<feature type="disulfide bond" description="Redox-active" evidence="1">
    <location>
        <begin position="19"/>
        <end position="53"/>
    </location>
</feature>
<feature type="helix" evidence="3">
    <location>
        <begin position="3"/>
        <end position="6"/>
    </location>
</feature>
<feature type="helix" evidence="3">
    <location>
        <begin position="7"/>
        <end position="10"/>
    </location>
</feature>
<feature type="strand" evidence="3">
    <location>
        <begin position="12"/>
        <end position="18"/>
    </location>
</feature>
<feature type="helix" evidence="3">
    <location>
        <begin position="23"/>
        <end position="25"/>
    </location>
</feature>
<feature type="helix" evidence="3">
    <location>
        <begin position="26"/>
        <end position="42"/>
    </location>
</feature>
<feature type="strand" evidence="3">
    <location>
        <begin position="48"/>
        <end position="52"/>
    </location>
</feature>
<feature type="strand" evidence="3">
    <location>
        <begin position="59"/>
        <end position="63"/>
    </location>
</feature>
<feature type="helix" evidence="3">
    <location>
        <begin position="65"/>
        <end position="67"/>
    </location>
</feature>
<feature type="strand" evidence="3">
    <location>
        <begin position="69"/>
        <end position="73"/>
    </location>
</feature>
<feature type="helix" evidence="3">
    <location>
        <begin position="79"/>
        <end position="91"/>
    </location>
</feature>